<sequence>MAVFTAVSDADLALWMRHYDLGDVVAFRGIPSGIENSNFFLTTTHGEYVLTIFENLTAGQLPFYIDLMSHLAKHGVPVPAPVARDDGTLFGELHGKPAAIVTKLEGAAELAPGIEHCVEVGQMLARMHLAGRDYPQHQPNLRSLPWWRDAVPAIVPFITGEQRALLEGELAHQAAFFASDDYAALPEGPCHCDLFRDNALFAHAAPDTGHSVRLGGFFDFYFAGCDKWLFDVAVTVNDWCVDLSTGALDAGRADALLRAYQTVRPFTTGERRHWGDMLRAGAYRFWVSRLYDFHLPRAAQMLKPHDPGHFERILRERIAHAGALPETHACN</sequence>
<reference key="1">
    <citation type="journal article" date="2005" name="BMC Genomics">
        <title>Bacterial genome adaptation to niches: divergence of the potential virulence genes in three Burkholderia species of different survival strategies.</title>
        <authorList>
            <person name="Kim H.S."/>
            <person name="Schell M.A."/>
            <person name="Yu Y."/>
            <person name="Ulrich R.L."/>
            <person name="Sarria S.H."/>
            <person name="Nierman W.C."/>
            <person name="DeShazer D."/>
        </authorList>
    </citation>
    <scope>NUCLEOTIDE SEQUENCE [LARGE SCALE GENOMIC DNA]</scope>
    <source>
        <strain>ATCC 700388 / DSM 13276 / CCUG 48851 / CIP 106301 / E264</strain>
    </source>
</reference>
<feature type="chain" id="PRO_0000300790" description="Homoserine kinase">
    <location>
        <begin position="1"/>
        <end position="331"/>
    </location>
</feature>
<accession>Q2T7P9</accession>
<evidence type="ECO:0000255" key="1">
    <source>
        <dbReference type="HAMAP-Rule" id="MF_00301"/>
    </source>
</evidence>
<keyword id="KW-0028">Amino-acid biosynthesis</keyword>
<keyword id="KW-0067">ATP-binding</keyword>
<keyword id="KW-0418">Kinase</keyword>
<keyword id="KW-0547">Nucleotide-binding</keyword>
<keyword id="KW-0791">Threonine biosynthesis</keyword>
<keyword id="KW-0808">Transferase</keyword>
<name>KHSE_BURTA</name>
<gene>
    <name evidence="1" type="primary">thrB</name>
    <name type="ordered locus">BTH_II0600</name>
</gene>
<dbReference type="EC" id="2.7.1.39" evidence="1"/>
<dbReference type="EMBL" id="CP000085">
    <property type="protein sequence ID" value="ABC34066.1"/>
    <property type="molecule type" value="Genomic_DNA"/>
</dbReference>
<dbReference type="RefSeq" id="WP_009895710.1">
    <property type="nucleotide sequence ID" value="NZ_CP008786.1"/>
</dbReference>
<dbReference type="SMR" id="Q2T7P9"/>
<dbReference type="GeneID" id="45118092"/>
<dbReference type="KEGG" id="bte:BTH_II0600"/>
<dbReference type="HOGENOM" id="CLU_053300_0_0_4"/>
<dbReference type="UniPathway" id="UPA00050">
    <property type="reaction ID" value="UER00064"/>
</dbReference>
<dbReference type="Proteomes" id="UP000001930">
    <property type="component" value="Chromosome II"/>
</dbReference>
<dbReference type="GO" id="GO:0005524">
    <property type="term" value="F:ATP binding"/>
    <property type="evidence" value="ECO:0007669"/>
    <property type="project" value="UniProtKB-KW"/>
</dbReference>
<dbReference type="GO" id="GO:0004413">
    <property type="term" value="F:homoserine kinase activity"/>
    <property type="evidence" value="ECO:0007669"/>
    <property type="project" value="UniProtKB-UniRule"/>
</dbReference>
<dbReference type="GO" id="GO:0009088">
    <property type="term" value="P:threonine biosynthetic process"/>
    <property type="evidence" value="ECO:0007669"/>
    <property type="project" value="UniProtKB-UniRule"/>
</dbReference>
<dbReference type="CDD" id="cd05153">
    <property type="entry name" value="HomoserineK_II"/>
    <property type="match status" value="1"/>
</dbReference>
<dbReference type="Gene3D" id="3.90.1200.10">
    <property type="match status" value="1"/>
</dbReference>
<dbReference type="Gene3D" id="3.30.200.20">
    <property type="entry name" value="Phosphorylase Kinase, domain 1"/>
    <property type="match status" value="1"/>
</dbReference>
<dbReference type="HAMAP" id="MF_00301">
    <property type="entry name" value="Homoser_kinase_2"/>
    <property type="match status" value="1"/>
</dbReference>
<dbReference type="InterPro" id="IPR002575">
    <property type="entry name" value="Aminoglycoside_PTrfase"/>
</dbReference>
<dbReference type="InterPro" id="IPR005280">
    <property type="entry name" value="Homoserine_kinase_II"/>
</dbReference>
<dbReference type="InterPro" id="IPR011009">
    <property type="entry name" value="Kinase-like_dom_sf"/>
</dbReference>
<dbReference type="InterPro" id="IPR050249">
    <property type="entry name" value="Pseudomonas-type_ThrB"/>
</dbReference>
<dbReference type="NCBIfam" id="NF003558">
    <property type="entry name" value="PRK05231.1"/>
    <property type="match status" value="1"/>
</dbReference>
<dbReference type="NCBIfam" id="TIGR00938">
    <property type="entry name" value="thrB_alt"/>
    <property type="match status" value="1"/>
</dbReference>
<dbReference type="PANTHER" id="PTHR21064:SF6">
    <property type="entry name" value="AMINOGLYCOSIDE PHOSPHOTRANSFERASE DOMAIN-CONTAINING PROTEIN"/>
    <property type="match status" value="1"/>
</dbReference>
<dbReference type="PANTHER" id="PTHR21064">
    <property type="entry name" value="AMINOGLYCOSIDE PHOSPHOTRANSFERASE DOMAIN-CONTAINING PROTEIN-RELATED"/>
    <property type="match status" value="1"/>
</dbReference>
<dbReference type="Pfam" id="PF01636">
    <property type="entry name" value="APH"/>
    <property type="match status" value="1"/>
</dbReference>
<dbReference type="SUPFAM" id="SSF56112">
    <property type="entry name" value="Protein kinase-like (PK-like)"/>
    <property type="match status" value="1"/>
</dbReference>
<proteinExistence type="inferred from homology"/>
<comment type="catalytic activity">
    <reaction evidence="1">
        <text>L-homoserine + ATP = O-phospho-L-homoserine + ADP + H(+)</text>
        <dbReference type="Rhea" id="RHEA:13985"/>
        <dbReference type="ChEBI" id="CHEBI:15378"/>
        <dbReference type="ChEBI" id="CHEBI:30616"/>
        <dbReference type="ChEBI" id="CHEBI:57476"/>
        <dbReference type="ChEBI" id="CHEBI:57590"/>
        <dbReference type="ChEBI" id="CHEBI:456216"/>
        <dbReference type="EC" id="2.7.1.39"/>
    </reaction>
</comment>
<comment type="pathway">
    <text evidence="1">Amino-acid biosynthesis; L-threonine biosynthesis; L-threonine from L-aspartate: step 4/5.</text>
</comment>
<comment type="similarity">
    <text evidence="1">Belongs to the pseudomonas-type ThrB family.</text>
</comment>
<protein>
    <recommendedName>
        <fullName evidence="1">Homoserine kinase</fullName>
        <shortName evidence="1">HK</shortName>
        <shortName evidence="1">HSK</shortName>
        <ecNumber evidence="1">2.7.1.39</ecNumber>
    </recommendedName>
</protein>
<organism>
    <name type="scientific">Burkholderia thailandensis (strain ATCC 700388 / DSM 13276 / CCUG 48851 / CIP 106301 / E264)</name>
    <dbReference type="NCBI Taxonomy" id="271848"/>
    <lineage>
        <taxon>Bacteria</taxon>
        <taxon>Pseudomonadati</taxon>
        <taxon>Pseudomonadota</taxon>
        <taxon>Betaproteobacteria</taxon>
        <taxon>Burkholderiales</taxon>
        <taxon>Burkholderiaceae</taxon>
        <taxon>Burkholderia</taxon>
        <taxon>pseudomallei group</taxon>
    </lineage>
</organism>